<feature type="signal peptide" evidence="1">
    <location>
        <begin position="1"/>
        <end position="27"/>
    </location>
</feature>
<feature type="chain" id="PRO_0000432886" description="Heme-binding protein Rv0203">
    <location>
        <begin position="28"/>
        <end position="136"/>
    </location>
</feature>
<feature type="binding site" description="axial binding residue" evidence="6 7">
    <location>
        <position position="60"/>
    </location>
    <ligand>
        <name>heme</name>
        <dbReference type="ChEBI" id="CHEBI:30413"/>
    </ligand>
    <ligandPart>
        <name>Fe</name>
        <dbReference type="ChEBI" id="CHEBI:18248"/>
    </ligandPart>
</feature>
<feature type="binding site" evidence="7">
    <location>
        <position position="64"/>
    </location>
    <ligand>
        <name>heme</name>
        <dbReference type="ChEBI" id="CHEBI:30413"/>
    </ligand>
</feature>
<feature type="binding site" evidence="7">
    <location>
        <position position="90"/>
    </location>
    <ligand>
        <name>heme</name>
        <dbReference type="ChEBI" id="CHEBI:30413"/>
    </ligand>
</feature>
<feature type="disulfide bond" evidence="2">
    <location>
        <begin position="41"/>
        <end position="115"/>
    </location>
</feature>
<feature type="mutagenesis site" description="Does not bind heme." evidence="2 3">
    <original>Y</original>
    <variation>A</variation>
    <location>
        <position position="60"/>
    </location>
</feature>
<feature type="mutagenesis site" description="Decrease in heme binding." evidence="3">
    <original>Y</original>
    <variation>F</variation>
    <variation>H</variation>
    <location>
        <position position="60"/>
    </location>
</feature>
<feature type="mutagenesis site" description="Decrease in heme binding. Strong decrease in heme binding; when associated with A-90." evidence="3">
    <original>H</original>
    <variation>A</variation>
    <location>
        <position position="64"/>
    </location>
</feature>
<feature type="mutagenesis site" description="Decrease in heme binding. Strong decrease in heme binding; when associated with A-64." evidence="3">
    <original>H</original>
    <variation>A</variation>
    <location>
        <position position="90"/>
    </location>
</feature>
<accession>I6X8R5</accession>
<gene>
    <name evidence="9" type="ordered locus">Rv0203</name>
    <name evidence="8" type="ordered locus">RVBD_0203</name>
    <name evidence="10" type="ORF">P425_00212</name>
</gene>
<dbReference type="EMBL" id="AL123456">
    <property type="protein sequence ID" value="CCP42931.1"/>
    <property type="molecule type" value="Genomic_DNA"/>
</dbReference>
<dbReference type="EMBL" id="CP003248">
    <property type="protein sequence ID" value="AFN48054.1"/>
    <property type="molecule type" value="Genomic_DNA"/>
</dbReference>
<dbReference type="EMBL" id="JLDD01000001">
    <property type="protein sequence ID" value="KBJ41312.1"/>
    <property type="molecule type" value="Genomic_DNA"/>
</dbReference>
<dbReference type="RefSeq" id="NP_214717.1">
    <property type="nucleotide sequence ID" value="NC_000962.3"/>
</dbReference>
<dbReference type="RefSeq" id="WP_003401194.1">
    <property type="nucleotide sequence ID" value="NZ_NVQJ01000001.1"/>
</dbReference>
<dbReference type="PDB" id="3MAY">
    <property type="method" value="X-ray"/>
    <property type="resolution" value="2.50 A"/>
    <property type="chains" value="A/B/C/D/E/F/G/H=36-136"/>
</dbReference>
<dbReference type="PDBsum" id="3MAY"/>
<dbReference type="SMR" id="I6X8R5"/>
<dbReference type="STRING" id="83332.Rv0203"/>
<dbReference type="PaxDb" id="83332-Rv0203"/>
<dbReference type="GeneID" id="886748"/>
<dbReference type="KEGG" id="mtu:Rv0203"/>
<dbReference type="KEGG" id="mtv:RVBD_0203"/>
<dbReference type="PATRIC" id="fig|83332.111.peg.233"/>
<dbReference type="TubercuList" id="Rv0203"/>
<dbReference type="eggNOG" id="ENOG5031M5S">
    <property type="taxonomic scope" value="Bacteria"/>
</dbReference>
<dbReference type="InParanoid" id="I6X8R5"/>
<dbReference type="OrthoDB" id="4753125at2"/>
<dbReference type="Proteomes" id="UP000001584">
    <property type="component" value="Chromosome"/>
</dbReference>
<dbReference type="GO" id="GO:0005576">
    <property type="term" value="C:extracellular region"/>
    <property type="evidence" value="ECO:0007669"/>
    <property type="project" value="UniProtKB-SubCell"/>
</dbReference>
<dbReference type="GO" id="GO:0020037">
    <property type="term" value="F:heme binding"/>
    <property type="evidence" value="ECO:0007669"/>
    <property type="project" value="InterPro"/>
</dbReference>
<dbReference type="GO" id="GO:0046872">
    <property type="term" value="F:metal ion binding"/>
    <property type="evidence" value="ECO:0007669"/>
    <property type="project" value="UniProtKB-KW"/>
</dbReference>
<dbReference type="GO" id="GO:0015886">
    <property type="term" value="P:heme transport"/>
    <property type="evidence" value="ECO:0007669"/>
    <property type="project" value="InterPro"/>
</dbReference>
<dbReference type="FunFam" id="1.20.20.20:FF:000001">
    <property type="entry name" value="Putative exported protein"/>
    <property type="match status" value="1"/>
</dbReference>
<dbReference type="Gene3D" id="1.20.20.20">
    <property type="entry name" value="Haemophore, haem-binding domain"/>
    <property type="match status" value="1"/>
</dbReference>
<dbReference type="InterPro" id="IPR030937">
    <property type="entry name" value="Hemophore_Rv0203"/>
</dbReference>
<dbReference type="InterPro" id="IPR032407">
    <property type="entry name" value="MHB"/>
</dbReference>
<dbReference type="InterPro" id="IPR038378">
    <property type="entry name" value="MHB_sf"/>
</dbReference>
<dbReference type="NCBIfam" id="TIGR04530">
    <property type="entry name" value="hemophoreRv0203"/>
    <property type="match status" value="1"/>
</dbReference>
<dbReference type="NCBIfam" id="TIGR04529">
    <property type="entry name" value="MTB_hemophore"/>
    <property type="match status" value="1"/>
</dbReference>
<dbReference type="Pfam" id="PF16525">
    <property type="entry name" value="MHB"/>
    <property type="match status" value="1"/>
</dbReference>
<organism>
    <name type="scientific">Mycobacterium tuberculosis (strain ATCC 25618 / H37Rv)</name>
    <dbReference type="NCBI Taxonomy" id="83332"/>
    <lineage>
        <taxon>Bacteria</taxon>
        <taxon>Bacillati</taxon>
        <taxon>Actinomycetota</taxon>
        <taxon>Actinomycetes</taxon>
        <taxon>Mycobacteriales</taxon>
        <taxon>Mycobacteriaceae</taxon>
        <taxon>Mycobacterium</taxon>
        <taxon>Mycobacterium tuberculosis complex</taxon>
    </lineage>
</organism>
<comment type="function">
    <text evidence="2 3 4">Part of a heme-iron acquisition system. Acts by binding heme and delivering it to the membrane proteins MmpL3 and MmpL11. Can use free heme or heme from host hemoglobin.</text>
</comment>
<comment type="subunit">
    <text evidence="2">Dimer of dimers.</text>
</comment>
<comment type="subcellular location">
    <subcellularLocation>
        <location evidence="2">Secreted</location>
    </subcellularLocation>
</comment>
<reference key="1">
    <citation type="journal article" date="1998" name="Nature">
        <title>Deciphering the biology of Mycobacterium tuberculosis from the complete genome sequence.</title>
        <authorList>
            <person name="Cole S.T."/>
            <person name="Brosch R."/>
            <person name="Parkhill J."/>
            <person name="Garnier T."/>
            <person name="Churcher C.M."/>
            <person name="Harris D.E."/>
            <person name="Gordon S.V."/>
            <person name="Eiglmeier K."/>
            <person name="Gas S."/>
            <person name="Barry C.E. III"/>
            <person name="Tekaia F."/>
            <person name="Badcock K."/>
            <person name="Basham D."/>
            <person name="Brown D."/>
            <person name="Chillingworth T."/>
            <person name="Connor R."/>
            <person name="Davies R.M."/>
            <person name="Devlin K."/>
            <person name="Feltwell T."/>
            <person name="Gentles S."/>
            <person name="Hamlin N."/>
            <person name="Holroyd S."/>
            <person name="Hornsby T."/>
            <person name="Jagels K."/>
            <person name="Krogh A."/>
            <person name="McLean J."/>
            <person name="Moule S."/>
            <person name="Murphy L.D."/>
            <person name="Oliver S."/>
            <person name="Osborne J."/>
            <person name="Quail M.A."/>
            <person name="Rajandream M.A."/>
            <person name="Rogers J."/>
            <person name="Rutter S."/>
            <person name="Seeger K."/>
            <person name="Skelton S."/>
            <person name="Squares S."/>
            <person name="Squares R."/>
            <person name="Sulston J.E."/>
            <person name="Taylor K."/>
            <person name="Whitehead S."/>
            <person name="Barrell B.G."/>
        </authorList>
    </citation>
    <scope>NUCLEOTIDE SEQUENCE [LARGE SCALE GENOMIC DNA]</scope>
    <source>
        <strain>ATCC 25618 / H37Rv</strain>
    </source>
</reference>
<reference key="2">
    <citation type="submission" date="2013-11" db="EMBL/GenBank/DDBJ databases">
        <title>The genome sequence of Mycobacterium tuberculosis H37Rv.</title>
        <authorList>
            <consortium name="The Broad Institute Genome Sequencing Platform"/>
            <person name="Galagan J."/>
            <person name="Kreiswirth B."/>
            <person name="Dobos K."/>
            <person name="Fortune S."/>
            <person name="Fitzgerald M."/>
            <person name="Young S.K."/>
            <person name="Zeng Q."/>
            <person name="Gargeya S."/>
            <person name="Abouelleil A."/>
            <person name="Alvarado L."/>
            <person name="Berlin A.M."/>
            <person name="Chapman S.B."/>
            <person name="Gainer-Dewar J."/>
            <person name="Goldberg J."/>
            <person name="Gnerre S."/>
            <person name="Griggs A."/>
            <person name="Gujja S."/>
            <person name="Hansen M."/>
            <person name="Howarth C."/>
            <person name="Imamovic A."/>
            <person name="Larimer J."/>
            <person name="McCowan C."/>
            <person name="Murphy C."/>
            <person name="Pearson M."/>
            <person name="Poon T."/>
            <person name="Priest M."/>
            <person name="Roberts A."/>
            <person name="Saif S."/>
            <person name="Shea T."/>
            <person name="Sykes S."/>
            <person name="Wortman J."/>
            <person name="Nusbaum C."/>
            <person name="Birren B."/>
        </authorList>
    </citation>
    <scope>NUCLEOTIDE SEQUENCE [LARGE SCALE GENOMIC DNA]</scope>
    <source>
        <strain>ATCC 25618 / H37Rv</strain>
    </source>
</reference>
<reference key="3">
    <citation type="submission" date="2014-04" db="EMBL/GenBank/DDBJ databases">
        <title>The genome sequence of Mycobacterium tuberculosis H37Rv.</title>
        <authorList>
            <consortium name="The Broad Institute Genomics Platform"/>
            <consortium name="The Broad Institute Genome Sequencing Center for Infectious Disease"/>
            <person name="Earl A.M."/>
            <person name="Kreiswirth B."/>
            <person name="Gomez J."/>
            <person name="Victor T."/>
            <person name="Desjardins C."/>
            <person name="Abeel T."/>
            <person name="Young S."/>
            <person name="Zeng Q."/>
            <person name="Gargeya S."/>
            <person name="Abouelleil A."/>
            <person name="Alvarado L."/>
            <person name="Chapman S.B."/>
            <person name="Gainer-Dewar J."/>
            <person name="Goldberg J."/>
            <person name="Griggs A."/>
            <person name="Gujja S."/>
            <person name="Hansen M."/>
            <person name="Howarth C."/>
            <person name="Imamovic A."/>
            <person name="Larimer J."/>
            <person name="Murphy C."/>
            <person name="Naylor J."/>
            <person name="Pearson M."/>
            <person name="Poon T.W."/>
            <person name="Priest M."/>
            <person name="Roberts A."/>
            <person name="Saif S."/>
            <person name="Shea T."/>
            <person name="Sykes S."/>
            <person name="Wortman J."/>
            <person name="Nusbaum C."/>
            <person name="Birren B."/>
        </authorList>
    </citation>
    <scope>NUCLEOTIDE SEQUENCE [LARGE SCALE GENOMIC DNA]</scope>
    <source>
        <strain>ATCC 25618 / H37Rv</strain>
    </source>
</reference>
<reference key="4">
    <citation type="journal article" date="2011" name="Mol. Cell. Proteomics">
        <title>Proteogenomic analysis of Mycobacterium tuberculosis by high resolution mass spectrometry.</title>
        <authorList>
            <person name="Kelkar D.S."/>
            <person name="Kumar D."/>
            <person name="Kumar P."/>
            <person name="Balakrishnan L."/>
            <person name="Muthusamy B."/>
            <person name="Yadav A.K."/>
            <person name="Shrivastava P."/>
            <person name="Marimuthu A."/>
            <person name="Anand S."/>
            <person name="Sundaram H."/>
            <person name="Kingsbury R."/>
            <person name="Harsha H.C."/>
            <person name="Nair B."/>
            <person name="Prasad T.S."/>
            <person name="Chauhan D.S."/>
            <person name="Katoch K."/>
            <person name="Katoch V.M."/>
            <person name="Kumar P."/>
            <person name="Chaerkady R."/>
            <person name="Ramachandran S."/>
            <person name="Dash D."/>
            <person name="Pandey A."/>
        </authorList>
    </citation>
    <scope>IDENTIFICATION BY MASS SPECTROMETRY [LARGE SCALE ANALYSIS]</scope>
    <source>
        <strain>ATCC 25618 / H37Rv</strain>
    </source>
</reference>
<reference key="5">
    <citation type="journal article" date="2012" name="Biochemistry">
        <title>Characterization of heme ligation properties of Rv0203, a secreted heme binding protein involved in Mycobacterium tuberculosis heme uptake.</title>
        <authorList>
            <person name="Owens C.P."/>
            <person name="Du J."/>
            <person name="Dawson J.H."/>
            <person name="Goulding C.W."/>
        </authorList>
    </citation>
    <scope>FUNCTION</scope>
    <scope>HEME BINDING</scope>
    <scope>MUTAGENESIS OF TYR-60; HIS-64 AND HIS-90</scope>
</reference>
<reference key="6">
    <citation type="journal article" date="2013" name="J. Biol. Chem.">
        <title>The Mycobacterium tuberculosis secreted protein Rv0203 transfers heme to membrane proteins MmpL3 and MmpL11.</title>
        <authorList>
            <person name="Owens C.P."/>
            <person name="Chim N."/>
            <person name="Graves A.B."/>
            <person name="Harmston C.A."/>
            <person name="Iniguez A."/>
            <person name="Contreras H."/>
            <person name="Liptak M.D."/>
            <person name="Goulding C.W."/>
        </authorList>
    </citation>
    <scope>FUNCTION</scope>
    <scope>HEME BINDING</scope>
</reference>
<reference key="7">
    <citation type="journal article" date="2011" name="Proc. Natl. Acad. Sci. U.S.A.">
        <title>Discovery and characterization of a unique mycobacterial heme acquisition system.</title>
        <authorList>
            <person name="Tullius M.V."/>
            <person name="Harmston C.A."/>
            <person name="Owens C.P."/>
            <person name="Chim N."/>
            <person name="Morse R.P."/>
            <person name="McMath L.M."/>
            <person name="Iniguez A."/>
            <person name="Kimmey J.M."/>
            <person name="Sawaya M.R."/>
            <person name="Whitelegge J.P."/>
            <person name="Horwitz M.A."/>
            <person name="Goulding C.W."/>
        </authorList>
    </citation>
    <scope>X-RAY CRYSTALLOGRAPHY (2.50 ANGSTROMS) OF 36-136</scope>
    <scope>FUNCTION</scope>
    <scope>HEME BINDING</scope>
    <scope>SUBUNIT</scope>
    <scope>SUBCELLULAR LOCATION</scope>
    <scope>DISULFIDE BOND</scope>
    <scope>MUTAGENESIS OF TYR-60</scope>
    <source>
        <strain>H37Rv</strain>
    </source>
</reference>
<protein>
    <recommendedName>
        <fullName evidence="5">Heme-binding protein Rv0203</fullName>
    </recommendedName>
</protein>
<proteinExistence type="evidence at protein level"/>
<name>RV203_MYCTU</name>
<evidence type="ECO:0000255" key="1"/>
<evidence type="ECO:0000269" key="2">
    <source>
    </source>
</evidence>
<evidence type="ECO:0000269" key="3">
    <source>
    </source>
</evidence>
<evidence type="ECO:0000269" key="4">
    <source>
    </source>
</evidence>
<evidence type="ECO:0000305" key="5"/>
<evidence type="ECO:0000305" key="6">
    <source>
    </source>
</evidence>
<evidence type="ECO:0000305" key="7">
    <source>
    </source>
</evidence>
<evidence type="ECO:0000312" key="8">
    <source>
        <dbReference type="EMBL" id="AFN48054.1"/>
    </source>
</evidence>
<evidence type="ECO:0000312" key="9">
    <source>
        <dbReference type="EMBL" id="CCP42931.1"/>
    </source>
</evidence>
<evidence type="ECO:0000312" key="10">
    <source>
        <dbReference type="EMBL" id="KBJ41312.1"/>
    </source>
</evidence>
<sequence>MKTGTATTRRRLLAVLIALALPGAAVALLAEPSATGASDPCAASEVARTVGSVAKSMGDYLDSHPETNQVMTAVLQQQVGPGSVASLKAHFEANPKVASDLHALSQPLTDLSTRCSLPISGLQAIGLMQAVQGARR</sequence>
<keyword id="KW-0002">3D-structure</keyword>
<keyword id="KW-1015">Disulfide bond</keyword>
<keyword id="KW-0349">Heme</keyword>
<keyword id="KW-0408">Iron</keyword>
<keyword id="KW-0479">Metal-binding</keyword>
<keyword id="KW-1185">Reference proteome</keyword>
<keyword id="KW-0964">Secreted</keyword>
<keyword id="KW-0732">Signal</keyword>